<evidence type="ECO:0000250" key="1">
    <source>
        <dbReference type="UniProtKB" id="Q9H6T3"/>
    </source>
</evidence>
<evidence type="ECO:0000256" key="2">
    <source>
        <dbReference type="SAM" id="MobiDB-lite"/>
    </source>
</evidence>
<evidence type="ECO:0000305" key="3"/>
<name>RPAP3_CHICK</name>
<organism>
    <name type="scientific">Gallus gallus</name>
    <name type="common">Chicken</name>
    <dbReference type="NCBI Taxonomy" id="9031"/>
    <lineage>
        <taxon>Eukaryota</taxon>
        <taxon>Metazoa</taxon>
        <taxon>Chordata</taxon>
        <taxon>Craniata</taxon>
        <taxon>Vertebrata</taxon>
        <taxon>Euteleostomi</taxon>
        <taxon>Archelosauria</taxon>
        <taxon>Archosauria</taxon>
        <taxon>Dinosauria</taxon>
        <taxon>Saurischia</taxon>
        <taxon>Theropoda</taxon>
        <taxon>Coelurosauria</taxon>
        <taxon>Aves</taxon>
        <taxon>Neognathae</taxon>
        <taxon>Galloanserae</taxon>
        <taxon>Galliformes</taxon>
        <taxon>Phasianidae</taxon>
        <taxon>Phasianinae</taxon>
        <taxon>Gallus</taxon>
    </lineage>
</organism>
<comment type="function">
    <text evidence="1">May for an interface between the RNA polymerase II enzyme and chaperone/scaffolding protein.</text>
</comment>
<comment type="similarity">
    <text evidence="3">Belongs to the RPAP3 family.</text>
</comment>
<gene>
    <name type="primary">RPAP3</name>
    <name type="ORF">RCJMB04_9l4</name>
</gene>
<reference key="1">
    <citation type="journal article" date="2005" name="Genome Biol.">
        <title>Full-length cDNAs from chicken bursal lymphocytes to facilitate gene function analysis.</title>
        <authorList>
            <person name="Caldwell R.B."/>
            <person name="Kierzek A.M."/>
            <person name="Arakawa H."/>
            <person name="Bezzubov Y."/>
            <person name="Zaim J."/>
            <person name="Fiedler P."/>
            <person name="Kutter S."/>
            <person name="Blagodatski A."/>
            <person name="Kostovska D."/>
            <person name="Koter M."/>
            <person name="Plachy J."/>
            <person name="Carninci P."/>
            <person name="Hayashizaki Y."/>
            <person name="Buerstedde J.-M."/>
        </authorList>
    </citation>
    <scope>NUCLEOTIDE SEQUENCE [LARGE SCALE MRNA]</scope>
    <source>
        <strain>CB</strain>
        <tissue>Bursa of Fabricius</tissue>
    </source>
</reference>
<sequence length="665" mass="75994">MTASNKALELQLQMKQNAEELQDFMRELESWEKDIKEVDSELRKQSGVSEENLPPIRNKTFKKKKKSKTKVPSKTTTEENKKNKIKSYDYEAWGKLDVDKILEELDKDDSTHDSVSPESDSEEDGIHIDKEKALAEKEKGNKYFKQGNFDEAIKCYTRGMHSDPFNPVLPTNRASAFYRMKKFSVAESDCNLALALDKNYTKAYARRGAARFALKNFQGAKEDYEKVLELDANNYEAKNELKKIEQALSSESSEQKEFEEAVRSELTENERRCIEEEQLKQKAVTEKDLGNGYFKEGKYEAAIECYTRGIAADGTNALLPANRAMAYLKIQKYEEAENDCTQALLLDASYSKAFARRGAARVALGKLKEAMQDFEAVLKLEPGNKQAINELTKIRNELAEKEQSCHEEYPAVLIKESEIKNIVKLTHNPLNLKSTKPLRRIAVEEVDDDVLNSDFSSSTSLVNNWKNSVNIETTENLDQDDQLTSMDIPKAKQLKIEEITDVSSPQLPAGAKGVSSVLHPSMNKQIERENKASFRSASPVPAIPANSFQLESDFRKLKDCPEKMYLYLKQIEPSIYPKLFQKSLDPDLFNQILRILHDFYIEKEEPSLILEILQRLSELKRFDMAVMFMSGSEKKITQVLFSHMKHMGLKDTSVEQLEKKYAVFS</sequence>
<feature type="chain" id="PRO_0000302797" description="RNA polymerase II-associated protein 3">
    <location>
        <begin position="1"/>
        <end position="665"/>
    </location>
</feature>
<feature type="repeat" description="TPR 1">
    <location>
        <begin position="8"/>
        <end position="41"/>
    </location>
</feature>
<feature type="repeat" description="TPR 2">
    <location>
        <begin position="133"/>
        <end position="166"/>
    </location>
</feature>
<feature type="repeat" description="TPR 3">
    <location>
        <begin position="168"/>
        <end position="200"/>
    </location>
</feature>
<feature type="repeat" description="TPR 4">
    <location>
        <begin position="201"/>
        <end position="234"/>
    </location>
</feature>
<feature type="repeat" description="TPR 5">
    <location>
        <begin position="283"/>
        <end position="316"/>
    </location>
</feature>
<feature type="repeat" description="TPR 6">
    <location>
        <begin position="318"/>
        <end position="350"/>
    </location>
</feature>
<feature type="repeat" description="TPR 7">
    <location>
        <begin position="351"/>
        <end position="384"/>
    </location>
</feature>
<feature type="region of interest" description="Disordered" evidence="2">
    <location>
        <begin position="38"/>
        <end position="83"/>
    </location>
</feature>
<feature type="region of interest" description="Disordered" evidence="2">
    <location>
        <begin position="107"/>
        <end position="127"/>
    </location>
</feature>
<feature type="compositionally biased region" description="Basic residues" evidence="2">
    <location>
        <begin position="59"/>
        <end position="71"/>
    </location>
</feature>
<dbReference type="EMBL" id="AJ720031">
    <property type="protein sequence ID" value="CAG31690.1"/>
    <property type="molecule type" value="mRNA"/>
</dbReference>
<dbReference type="RefSeq" id="NP_001006231.1">
    <property type="nucleotide sequence ID" value="NM_001006231.1"/>
</dbReference>
<dbReference type="SMR" id="Q5ZKQ3"/>
<dbReference type="FunCoup" id="Q5ZKQ3">
    <property type="interactions" value="898"/>
</dbReference>
<dbReference type="STRING" id="9031.ENSGALP00000015837"/>
<dbReference type="PaxDb" id="9031-ENSGALP00000041777"/>
<dbReference type="GeneID" id="417811"/>
<dbReference type="KEGG" id="gga:417811"/>
<dbReference type="CTD" id="79657"/>
<dbReference type="VEuPathDB" id="HostDB:geneid_417811"/>
<dbReference type="eggNOG" id="KOG4648">
    <property type="taxonomic scope" value="Eukaryota"/>
</dbReference>
<dbReference type="InParanoid" id="Q5ZKQ3"/>
<dbReference type="OrthoDB" id="629492at2759"/>
<dbReference type="PhylomeDB" id="Q5ZKQ3"/>
<dbReference type="PRO" id="PR:Q5ZKQ3"/>
<dbReference type="Proteomes" id="UP000000539">
    <property type="component" value="Unassembled WGS sequence"/>
</dbReference>
<dbReference type="FunFam" id="1.25.40.10:FF:000057">
    <property type="entry name" value="RNA polymerase II associated protein 3"/>
    <property type="match status" value="2"/>
</dbReference>
<dbReference type="Gene3D" id="1.25.40.10">
    <property type="entry name" value="Tetratricopeptide repeat domain"/>
    <property type="match status" value="2"/>
</dbReference>
<dbReference type="InterPro" id="IPR051966">
    <property type="entry name" value="RPAP3"/>
</dbReference>
<dbReference type="InterPro" id="IPR025986">
    <property type="entry name" value="RPAP3-like_C"/>
</dbReference>
<dbReference type="InterPro" id="IPR011990">
    <property type="entry name" value="TPR-like_helical_dom_sf"/>
</dbReference>
<dbReference type="InterPro" id="IPR019734">
    <property type="entry name" value="TPR_rpt"/>
</dbReference>
<dbReference type="PANTHER" id="PTHR46423">
    <property type="entry name" value="RNA POLYMERASE II-ASSOCIATED PROTEIN 3"/>
    <property type="match status" value="1"/>
</dbReference>
<dbReference type="PANTHER" id="PTHR46423:SF1">
    <property type="entry name" value="RNA POLYMERASE II-ASSOCIATED PROTEIN 3"/>
    <property type="match status" value="1"/>
</dbReference>
<dbReference type="Pfam" id="PF13877">
    <property type="entry name" value="RPAP3_C"/>
    <property type="match status" value="1"/>
</dbReference>
<dbReference type="Pfam" id="PF00515">
    <property type="entry name" value="TPR_1"/>
    <property type="match status" value="1"/>
</dbReference>
<dbReference type="Pfam" id="PF13432">
    <property type="entry name" value="TPR_16"/>
    <property type="match status" value="1"/>
</dbReference>
<dbReference type="Pfam" id="PF13181">
    <property type="entry name" value="TPR_8"/>
    <property type="match status" value="1"/>
</dbReference>
<dbReference type="SMART" id="SM00028">
    <property type="entry name" value="TPR"/>
    <property type="match status" value="6"/>
</dbReference>
<dbReference type="SUPFAM" id="SSF48452">
    <property type="entry name" value="TPR-like"/>
    <property type="match status" value="2"/>
</dbReference>
<dbReference type="PROSITE" id="PS50005">
    <property type="entry name" value="TPR"/>
    <property type="match status" value="5"/>
</dbReference>
<dbReference type="PROSITE" id="PS50293">
    <property type="entry name" value="TPR_REGION"/>
    <property type="match status" value="1"/>
</dbReference>
<proteinExistence type="evidence at transcript level"/>
<keyword id="KW-1185">Reference proteome</keyword>
<keyword id="KW-0677">Repeat</keyword>
<keyword id="KW-0802">TPR repeat</keyword>
<protein>
    <recommendedName>
        <fullName>RNA polymerase II-associated protein 3</fullName>
    </recommendedName>
</protein>
<accession>Q5ZKQ3</accession>